<name>MVD1_HUMAN</name>
<organism>
    <name type="scientific">Homo sapiens</name>
    <name type="common">Human</name>
    <dbReference type="NCBI Taxonomy" id="9606"/>
    <lineage>
        <taxon>Eukaryota</taxon>
        <taxon>Metazoa</taxon>
        <taxon>Chordata</taxon>
        <taxon>Craniata</taxon>
        <taxon>Vertebrata</taxon>
        <taxon>Euteleostomi</taxon>
        <taxon>Mammalia</taxon>
        <taxon>Eutheria</taxon>
        <taxon>Euarchontoglires</taxon>
        <taxon>Primates</taxon>
        <taxon>Haplorrhini</taxon>
        <taxon>Catarrhini</taxon>
        <taxon>Hominidae</taxon>
        <taxon>Homo</taxon>
    </lineage>
</organism>
<dbReference type="EC" id="4.1.1.33" evidence="4 6 7"/>
<dbReference type="EMBL" id="U49260">
    <property type="protein sequence ID" value="AAC50440.1"/>
    <property type="molecule type" value="mRNA"/>
</dbReference>
<dbReference type="EMBL" id="BT006930">
    <property type="protein sequence ID" value="AAP35576.1"/>
    <property type="molecule type" value="mRNA"/>
</dbReference>
<dbReference type="EMBL" id="CH471184">
    <property type="protein sequence ID" value="EAW66792.1"/>
    <property type="molecule type" value="Genomic_DNA"/>
</dbReference>
<dbReference type="EMBL" id="BC000011">
    <property type="protein sequence ID" value="AAH00011.1"/>
    <property type="molecule type" value="mRNA"/>
</dbReference>
<dbReference type="CCDS" id="CCDS10968.1"/>
<dbReference type="RefSeq" id="NP_002452.1">
    <property type="nucleotide sequence ID" value="NM_002461.3"/>
</dbReference>
<dbReference type="PDB" id="3D4J">
    <property type="method" value="X-ray"/>
    <property type="resolution" value="2.40 A"/>
    <property type="chains" value="A/B=1-400"/>
</dbReference>
<dbReference type="PDBsum" id="3D4J"/>
<dbReference type="SMR" id="P53602"/>
<dbReference type="BioGRID" id="110682">
    <property type="interactions" value="60"/>
</dbReference>
<dbReference type="FunCoup" id="P53602">
    <property type="interactions" value="814"/>
</dbReference>
<dbReference type="IntAct" id="P53602">
    <property type="interactions" value="16"/>
</dbReference>
<dbReference type="STRING" id="9606.ENSP00000301012"/>
<dbReference type="BindingDB" id="P53602"/>
<dbReference type="ChEMBL" id="CHEMBL4340"/>
<dbReference type="GuidetoPHARMACOLOGY" id="642"/>
<dbReference type="SwissLipids" id="SLP:000001242"/>
<dbReference type="GlyGen" id="P53602">
    <property type="glycosylation" value="2 sites, 1 O-linked glycan (1 site)"/>
</dbReference>
<dbReference type="iPTMnet" id="P53602"/>
<dbReference type="PhosphoSitePlus" id="P53602"/>
<dbReference type="BioMuta" id="MVD"/>
<dbReference type="DMDM" id="1706681"/>
<dbReference type="jPOST" id="P53602"/>
<dbReference type="MassIVE" id="P53602"/>
<dbReference type="PaxDb" id="9606-ENSP00000301012"/>
<dbReference type="PeptideAtlas" id="P53602"/>
<dbReference type="ProteomicsDB" id="56588"/>
<dbReference type="Pumba" id="P53602"/>
<dbReference type="Antibodypedia" id="30739">
    <property type="antibodies" value="200 antibodies from 28 providers"/>
</dbReference>
<dbReference type="DNASU" id="4597"/>
<dbReference type="Ensembl" id="ENST00000301012.8">
    <property type="protein sequence ID" value="ENSP00000301012.3"/>
    <property type="gene ID" value="ENSG00000167508.12"/>
</dbReference>
<dbReference type="GeneID" id="4597"/>
<dbReference type="KEGG" id="hsa:4597"/>
<dbReference type="MANE-Select" id="ENST00000301012.8">
    <property type="protein sequence ID" value="ENSP00000301012.3"/>
    <property type="RefSeq nucleotide sequence ID" value="NM_002461.3"/>
    <property type="RefSeq protein sequence ID" value="NP_002452.1"/>
</dbReference>
<dbReference type="UCSC" id="uc002flg.2">
    <property type="organism name" value="human"/>
</dbReference>
<dbReference type="AGR" id="HGNC:7529"/>
<dbReference type="CTD" id="4597"/>
<dbReference type="DisGeNET" id="4597"/>
<dbReference type="GeneCards" id="MVD"/>
<dbReference type="HGNC" id="HGNC:7529">
    <property type="gene designation" value="MVD"/>
</dbReference>
<dbReference type="HPA" id="ENSG00000167508">
    <property type="expression patterns" value="Low tissue specificity"/>
</dbReference>
<dbReference type="MalaCards" id="MVD"/>
<dbReference type="MIM" id="603236">
    <property type="type" value="gene"/>
</dbReference>
<dbReference type="MIM" id="614714">
    <property type="type" value="phenotype"/>
</dbReference>
<dbReference type="neXtProt" id="NX_P53602"/>
<dbReference type="OpenTargets" id="ENSG00000167508"/>
<dbReference type="Orphanet" id="79152">
    <property type="disease" value="Disseminated superficial actinic porokeratosis"/>
</dbReference>
<dbReference type="PharmGKB" id="PA31330"/>
<dbReference type="VEuPathDB" id="HostDB:ENSG00000167508"/>
<dbReference type="eggNOG" id="KOG2833">
    <property type="taxonomic scope" value="Eukaryota"/>
</dbReference>
<dbReference type="GeneTree" id="ENSGT00390000015359"/>
<dbReference type="HOGENOM" id="CLU_040369_4_4_1"/>
<dbReference type="InParanoid" id="P53602"/>
<dbReference type="OMA" id="LTLHAMM"/>
<dbReference type="OrthoDB" id="10253702at2759"/>
<dbReference type="PAN-GO" id="P53602">
    <property type="GO annotations" value="3 GO annotations based on evolutionary models"/>
</dbReference>
<dbReference type="PhylomeDB" id="P53602"/>
<dbReference type="TreeFam" id="TF105952"/>
<dbReference type="BioCyc" id="MetaCyc:ENSG00000167508-MONOMER"/>
<dbReference type="BRENDA" id="4.1.1.33">
    <property type="organism ID" value="2681"/>
</dbReference>
<dbReference type="PathwayCommons" id="P53602"/>
<dbReference type="Reactome" id="R-HSA-191273">
    <property type="pathway name" value="Cholesterol biosynthesis"/>
</dbReference>
<dbReference type="Reactome" id="R-HSA-2426168">
    <property type="pathway name" value="Activation of gene expression by SREBF (SREBP)"/>
</dbReference>
<dbReference type="Reactome" id="R-HSA-446199">
    <property type="pathway name" value="Synthesis of Dolichyl-phosphate"/>
</dbReference>
<dbReference type="SABIO-RK" id="P53602"/>
<dbReference type="SignaLink" id="P53602"/>
<dbReference type="SIGNOR" id="P53602"/>
<dbReference type="UniPathway" id="UPA00063"/>
<dbReference type="BioGRID-ORCS" id="4597">
    <property type="hits" value="508 hits in 1162 CRISPR screens"/>
</dbReference>
<dbReference type="ChiTaRS" id="MVD">
    <property type="organism name" value="human"/>
</dbReference>
<dbReference type="EvolutionaryTrace" id="P53602"/>
<dbReference type="GenomeRNAi" id="4597"/>
<dbReference type="Pharos" id="P53602">
    <property type="development level" value="Tchem"/>
</dbReference>
<dbReference type="PRO" id="PR:P53602"/>
<dbReference type="Proteomes" id="UP000005640">
    <property type="component" value="Chromosome 16"/>
</dbReference>
<dbReference type="RNAct" id="P53602">
    <property type="molecule type" value="protein"/>
</dbReference>
<dbReference type="Bgee" id="ENSG00000167508">
    <property type="expression patterns" value="Expressed in right hemisphere of cerebellum and 113 other cell types or tissues"/>
</dbReference>
<dbReference type="ExpressionAtlas" id="P53602">
    <property type="expression patterns" value="baseline and differential"/>
</dbReference>
<dbReference type="GO" id="GO:0005829">
    <property type="term" value="C:cytosol"/>
    <property type="evidence" value="ECO:0000314"/>
    <property type="project" value="UniProtKB"/>
</dbReference>
<dbReference type="GO" id="GO:0005524">
    <property type="term" value="F:ATP binding"/>
    <property type="evidence" value="ECO:0007669"/>
    <property type="project" value="UniProtKB-KW"/>
</dbReference>
<dbReference type="GO" id="GO:0004163">
    <property type="term" value="F:diphosphomevalonate decarboxylase activity"/>
    <property type="evidence" value="ECO:0000314"/>
    <property type="project" value="UniProtKB"/>
</dbReference>
<dbReference type="GO" id="GO:0030544">
    <property type="term" value="F:Hsp70 protein binding"/>
    <property type="evidence" value="ECO:0000353"/>
    <property type="project" value="UniProtKB"/>
</dbReference>
<dbReference type="GO" id="GO:0042803">
    <property type="term" value="F:protein homodimerization activity"/>
    <property type="evidence" value="ECO:0000314"/>
    <property type="project" value="UniProtKB"/>
</dbReference>
<dbReference type="GO" id="GO:0006695">
    <property type="term" value="P:cholesterol biosynthetic process"/>
    <property type="evidence" value="ECO:0000303"/>
    <property type="project" value="UniProtKB"/>
</dbReference>
<dbReference type="GO" id="GO:0019287">
    <property type="term" value="P:isopentenyl diphosphate biosynthetic process, mevalonate pathway"/>
    <property type="evidence" value="ECO:0000318"/>
    <property type="project" value="GO_Central"/>
</dbReference>
<dbReference type="GO" id="GO:0008299">
    <property type="term" value="P:isoprenoid biosynthetic process"/>
    <property type="evidence" value="ECO:0000314"/>
    <property type="project" value="UniProtKB"/>
</dbReference>
<dbReference type="GO" id="GO:0008284">
    <property type="term" value="P:positive regulation of cell population proliferation"/>
    <property type="evidence" value="ECO:0000315"/>
    <property type="project" value="UniProtKB"/>
</dbReference>
<dbReference type="FunFam" id="3.30.230.10:FF:000018">
    <property type="entry name" value="Diphosphomevalonate decarboxylase"/>
    <property type="match status" value="1"/>
</dbReference>
<dbReference type="FunFam" id="3.30.70.890:FF:000005">
    <property type="entry name" value="Diphosphomevalonate decarboxylase"/>
    <property type="match status" value="1"/>
</dbReference>
<dbReference type="Gene3D" id="3.30.230.10">
    <property type="match status" value="1"/>
</dbReference>
<dbReference type="Gene3D" id="3.30.70.890">
    <property type="entry name" value="GHMP kinase, C-terminal domain"/>
    <property type="match status" value="1"/>
</dbReference>
<dbReference type="InterPro" id="IPR036554">
    <property type="entry name" value="GHMP_kinase_C_sf"/>
</dbReference>
<dbReference type="InterPro" id="IPR005935">
    <property type="entry name" value="Mev_decarb"/>
</dbReference>
<dbReference type="InterPro" id="IPR029765">
    <property type="entry name" value="Mev_diP_decarb"/>
</dbReference>
<dbReference type="InterPro" id="IPR053859">
    <property type="entry name" value="MVD-like_N"/>
</dbReference>
<dbReference type="InterPro" id="IPR041431">
    <property type="entry name" value="Mvd1_C"/>
</dbReference>
<dbReference type="InterPro" id="IPR020568">
    <property type="entry name" value="Ribosomal_Su5_D2-typ_SF"/>
</dbReference>
<dbReference type="InterPro" id="IPR014721">
    <property type="entry name" value="Ribsml_uS5_D2-typ_fold_subgr"/>
</dbReference>
<dbReference type="NCBIfam" id="TIGR01240">
    <property type="entry name" value="mevDPdecarb"/>
    <property type="match status" value="1"/>
</dbReference>
<dbReference type="PANTHER" id="PTHR10977">
    <property type="entry name" value="DIPHOSPHOMEVALONATE DECARBOXYLASE"/>
    <property type="match status" value="1"/>
</dbReference>
<dbReference type="PANTHER" id="PTHR10977:SF3">
    <property type="entry name" value="DIPHOSPHOMEVALONATE DECARBOXYLASE"/>
    <property type="match status" value="1"/>
</dbReference>
<dbReference type="Pfam" id="PF18376">
    <property type="entry name" value="MDD_C"/>
    <property type="match status" value="1"/>
</dbReference>
<dbReference type="Pfam" id="PF22700">
    <property type="entry name" value="MVD-like_N"/>
    <property type="match status" value="1"/>
</dbReference>
<dbReference type="PIRSF" id="PIRSF015950">
    <property type="entry name" value="Mev_P_decrbx"/>
    <property type="match status" value="1"/>
</dbReference>
<dbReference type="SUPFAM" id="SSF55060">
    <property type="entry name" value="GHMP Kinase, C-terminal domain"/>
    <property type="match status" value="1"/>
</dbReference>
<dbReference type="SUPFAM" id="SSF54211">
    <property type="entry name" value="Ribosomal protein S5 domain 2-like"/>
    <property type="match status" value="1"/>
</dbReference>
<keyword id="KW-0002">3D-structure</keyword>
<keyword id="KW-0007">Acetylation</keyword>
<keyword id="KW-0067">ATP-binding</keyword>
<keyword id="KW-0152">Cholesterol biosynthesis</keyword>
<keyword id="KW-0153">Cholesterol metabolism</keyword>
<keyword id="KW-0963">Cytoplasm</keyword>
<keyword id="KW-0225">Disease variant</keyword>
<keyword id="KW-0444">Lipid biosynthesis</keyword>
<keyword id="KW-0443">Lipid metabolism</keyword>
<keyword id="KW-0456">Lyase</keyword>
<keyword id="KW-0547">Nucleotide-binding</keyword>
<keyword id="KW-0597">Phosphoprotein</keyword>
<keyword id="KW-1267">Proteomics identification</keyword>
<keyword id="KW-1185">Reference proteome</keyword>
<keyword id="KW-0752">Steroid biosynthesis</keyword>
<keyword id="KW-0753">Steroid metabolism</keyword>
<keyword id="KW-0756">Sterol biosynthesis</keyword>
<keyword id="KW-1207">Sterol metabolism</keyword>
<feature type="initiator methionine" description="Removed" evidence="11 12">
    <location>
        <position position="1"/>
    </location>
</feature>
<feature type="chain" id="PRO_0000087012" description="Diphosphomevalonate decarboxylase">
    <location>
        <begin position="2"/>
        <end position="400"/>
    </location>
</feature>
<feature type="binding site" evidence="1">
    <location>
        <begin position="23"/>
        <end position="26"/>
    </location>
    <ligand>
        <name>(R)-5-diphosphomevalonate</name>
        <dbReference type="ChEBI" id="CHEBI:57557"/>
    </ligand>
</feature>
<feature type="binding site" evidence="1">
    <location>
        <position position="78"/>
    </location>
    <ligand>
        <name>(R)-5-diphosphomevalonate</name>
        <dbReference type="ChEBI" id="CHEBI:57557"/>
    </ligand>
</feature>
<feature type="binding site" evidence="1">
    <location>
        <begin position="156"/>
        <end position="161"/>
    </location>
    <ligand>
        <name>(R)-5-diphosphomevalonate</name>
        <dbReference type="ChEBI" id="CHEBI:57557"/>
    </ligand>
</feature>
<feature type="binding site" evidence="1">
    <location>
        <position position="212"/>
    </location>
    <ligand>
        <name>(R)-5-diphosphomevalonate</name>
        <dbReference type="ChEBI" id="CHEBI:57557"/>
    </ligand>
</feature>
<feature type="modified residue" description="N-acetylalanine" evidence="11 12">
    <location>
        <position position="2"/>
    </location>
</feature>
<feature type="modified residue" description="Phosphoserine" evidence="10 13 14">
    <location>
        <position position="96"/>
    </location>
</feature>
<feature type="sequence variant" id="VAR_075052" description="In POROK7; uncertain significance; dbSNP:rs200033380." evidence="5">
    <original>P</original>
    <variation>R</variation>
    <location>
        <position position="101"/>
    </location>
</feature>
<feature type="sequence variant" id="VAR_075053" description="In POROK7; uncertain significance; dbSNP:rs776358937." evidence="5">
    <original>A</original>
    <variation>V</variation>
    <location>
        <position position="128"/>
    </location>
</feature>
<feature type="sequence variant" id="VAR_075054" description="In POROK7; uncertain significance." evidence="5">
    <original>R</original>
    <variation>L</variation>
    <location>
        <position position="161"/>
    </location>
</feature>
<feature type="sequence variant" id="VAR_075055" description="In POROK7; 1000-fold diminution in diphosphomevalonate decarboxylase activity; dbSNP:rs144010349." evidence="4 5">
    <original>R</original>
    <variation>Q</variation>
    <location>
        <position position="161"/>
    </location>
</feature>
<feature type="sequence variant" id="VAR_075056" description="In POROK7; uncertain significance; dbSNP:rs770939767." evidence="5">
    <original>R</original>
    <variation>Q</variation>
    <location>
        <position position="228"/>
    </location>
</feature>
<feature type="sequence variant" id="VAR_075057" description="In POROK7; uncertain significance; dbSNP:rs776684503." evidence="5">
    <original>R</original>
    <variation>W</variation>
    <location>
        <position position="228"/>
    </location>
</feature>
<feature type="sequence variant" id="VAR_075058" description="In POROK7; dbSNP:rs761991070." evidence="5">
    <original>F</original>
    <variation>S</variation>
    <location>
        <position position="249"/>
    </location>
</feature>
<feature type="sequence variant" id="VAR_051605" description="In dbSNP:rs34519538.">
    <original>N</original>
    <variation>H</variation>
    <location>
        <position position="278"/>
    </location>
</feature>
<feature type="sequence variant" id="VAR_075059" description="In POROK7; dbSNP:rs755948940." evidence="5">
    <original>N</original>
    <variation>S</variation>
    <location>
        <position position="292"/>
    </location>
</feature>
<feature type="sequence variant" id="VAR_075060" description="In POROK7; uncertain significance; dbSNP:rs764836183." evidence="5">
    <location>
        <position position="371"/>
    </location>
</feature>
<feature type="sequence variant" id="VAR_075061" description="In POROK7; uncertain significance; dbSNP:rs546127665." evidence="5">
    <original>G</original>
    <variation>R</variation>
    <location>
        <position position="376"/>
    </location>
</feature>
<feature type="mutagenesis site" description="15-fold inflation in KM for mevalonate diphosphate." evidence="4">
    <original>N</original>
    <variation>A</variation>
    <location>
        <position position="17"/>
    </location>
</feature>
<feature type="strand" evidence="15">
    <location>
        <begin position="10"/>
        <end position="14"/>
    </location>
</feature>
<feature type="strand" evidence="15">
    <location>
        <begin position="17"/>
        <end position="21"/>
    </location>
</feature>
<feature type="strand" evidence="15">
    <location>
        <begin position="26"/>
        <end position="28"/>
    </location>
</feature>
<feature type="turn" evidence="15">
    <location>
        <begin position="29"/>
        <end position="32"/>
    </location>
</feature>
<feature type="strand" evidence="15">
    <location>
        <begin position="33"/>
        <end position="36"/>
    </location>
</feature>
<feature type="strand" evidence="15">
    <location>
        <begin position="38"/>
        <end position="43"/>
    </location>
</feature>
<feature type="turn" evidence="15">
    <location>
        <begin position="45"/>
        <end position="47"/>
    </location>
</feature>
<feature type="strand" evidence="15">
    <location>
        <begin position="50"/>
        <end position="56"/>
    </location>
</feature>
<feature type="strand" evidence="15">
    <location>
        <begin position="64"/>
        <end position="67"/>
    </location>
</feature>
<feature type="helix" evidence="15">
    <location>
        <begin position="77"/>
        <end position="88"/>
    </location>
</feature>
<feature type="strand" evidence="15">
    <location>
        <begin position="110"/>
        <end position="118"/>
    </location>
</feature>
<feature type="turn" evidence="15">
    <location>
        <begin position="120"/>
        <end position="122"/>
    </location>
</feature>
<feature type="helix" evidence="15">
    <location>
        <begin position="126"/>
        <end position="139"/>
    </location>
</feature>
<feature type="turn" evidence="15">
    <location>
        <begin position="140"/>
        <end position="143"/>
    </location>
</feature>
<feature type="helix" evidence="15">
    <location>
        <begin position="149"/>
        <end position="155"/>
    </location>
</feature>
<feature type="helix" evidence="15">
    <location>
        <begin position="157"/>
        <end position="163"/>
    </location>
</feature>
<feature type="strand" evidence="15">
    <location>
        <begin position="164"/>
        <end position="170"/>
    </location>
</feature>
<feature type="strand" evidence="15">
    <location>
        <begin position="178"/>
        <end position="180"/>
    </location>
</feature>
<feature type="strand" evidence="15">
    <location>
        <begin position="183"/>
        <end position="187"/>
    </location>
</feature>
<feature type="helix" evidence="15">
    <location>
        <begin position="189"/>
        <end position="191"/>
    </location>
</feature>
<feature type="strand" evidence="15">
    <location>
        <begin position="195"/>
        <end position="202"/>
    </location>
</feature>
<feature type="helix" evidence="15">
    <location>
        <begin position="211"/>
        <end position="221"/>
    </location>
</feature>
<feature type="helix" evidence="15">
    <location>
        <begin position="223"/>
        <end position="231"/>
    </location>
</feature>
<feature type="helix" evidence="15">
    <location>
        <begin position="233"/>
        <end position="245"/>
    </location>
</feature>
<feature type="helix" evidence="15">
    <location>
        <begin position="249"/>
        <end position="268"/>
    </location>
</feature>
<feature type="strand" evidence="15">
    <location>
        <begin position="270"/>
        <end position="272"/>
    </location>
</feature>
<feature type="helix" evidence="15">
    <location>
        <begin position="279"/>
        <end position="295"/>
    </location>
</feature>
<feature type="strand" evidence="15">
    <location>
        <begin position="300"/>
        <end position="303"/>
    </location>
</feature>
<feature type="strand" evidence="15">
    <location>
        <begin position="306"/>
        <end position="308"/>
    </location>
</feature>
<feature type="strand" evidence="15">
    <location>
        <begin position="310"/>
        <end position="315"/>
    </location>
</feature>
<feature type="helix" evidence="15">
    <location>
        <begin position="316"/>
        <end position="318"/>
    </location>
</feature>
<feature type="helix" evidence="15">
    <location>
        <begin position="319"/>
        <end position="329"/>
    </location>
</feature>
<feature type="turn" evidence="15">
    <location>
        <begin position="337"/>
        <end position="339"/>
    </location>
</feature>
<feature type="strand" evidence="15">
    <location>
        <begin position="340"/>
        <end position="343"/>
    </location>
</feature>
<feature type="helix" evidence="15">
    <location>
        <begin position="352"/>
        <end position="358"/>
    </location>
</feature>
<feature type="strand" evidence="15">
    <location>
        <begin position="366"/>
        <end position="375"/>
    </location>
</feature>
<feature type="helix" evidence="15">
    <location>
        <begin position="385"/>
        <end position="387"/>
    </location>
</feature>
<feature type="strand" evidence="15">
    <location>
        <begin position="392"/>
        <end position="394"/>
    </location>
</feature>
<reference key="1">
    <citation type="journal article" date="1996" name="J. Biol. Chem.">
        <title>Molecular cloning and expression of the cDNAs encoding human and yeast mevalonate pyrophosphate decarboxylase.</title>
        <authorList>
            <person name="Toth M.J."/>
            <person name="Huwyler L."/>
        </authorList>
    </citation>
    <scope>NUCLEOTIDE SEQUENCE [MRNA]</scope>
    <scope>CATALYTIC ACTIVITY</scope>
    <scope>SUBUNIT</scope>
    <scope>TISSUE SPECIFICITY</scope>
    <source>
        <tissue>Liver</tissue>
    </source>
</reference>
<reference key="2">
    <citation type="submission" date="2003-05" db="EMBL/GenBank/DDBJ databases">
        <title>Cloning of human full-length CDSs in BD Creator(TM) system donor vector.</title>
        <authorList>
            <person name="Kalnine N."/>
            <person name="Chen X."/>
            <person name="Rolfs A."/>
            <person name="Halleck A."/>
            <person name="Hines L."/>
            <person name="Eisenstein S."/>
            <person name="Koundinya M."/>
            <person name="Raphael J."/>
            <person name="Moreira D."/>
            <person name="Kelley T."/>
            <person name="LaBaer J."/>
            <person name="Lin Y."/>
            <person name="Phelan M."/>
            <person name="Farmer A."/>
        </authorList>
    </citation>
    <scope>NUCLEOTIDE SEQUENCE [LARGE SCALE MRNA]</scope>
</reference>
<reference key="3">
    <citation type="submission" date="2005-07" db="EMBL/GenBank/DDBJ databases">
        <authorList>
            <person name="Mural R.J."/>
            <person name="Istrail S."/>
            <person name="Sutton G.G."/>
            <person name="Florea L."/>
            <person name="Halpern A.L."/>
            <person name="Mobarry C.M."/>
            <person name="Lippert R."/>
            <person name="Walenz B."/>
            <person name="Shatkay H."/>
            <person name="Dew I."/>
            <person name="Miller J.R."/>
            <person name="Flanigan M.J."/>
            <person name="Edwards N.J."/>
            <person name="Bolanos R."/>
            <person name="Fasulo D."/>
            <person name="Halldorsson B.V."/>
            <person name="Hannenhalli S."/>
            <person name="Turner R."/>
            <person name="Yooseph S."/>
            <person name="Lu F."/>
            <person name="Nusskern D.R."/>
            <person name="Shue B.C."/>
            <person name="Zheng X.H."/>
            <person name="Zhong F."/>
            <person name="Delcher A.L."/>
            <person name="Huson D.H."/>
            <person name="Kravitz S.A."/>
            <person name="Mouchard L."/>
            <person name="Reinert K."/>
            <person name="Remington K.A."/>
            <person name="Clark A.G."/>
            <person name="Waterman M.S."/>
            <person name="Eichler E.E."/>
            <person name="Adams M.D."/>
            <person name="Hunkapiller M.W."/>
            <person name="Myers E.W."/>
            <person name="Venter J.C."/>
        </authorList>
    </citation>
    <scope>NUCLEOTIDE SEQUENCE [LARGE SCALE GENOMIC DNA]</scope>
</reference>
<reference key="4">
    <citation type="journal article" date="2004" name="Genome Res.">
        <title>The status, quality, and expansion of the NIH full-length cDNA project: the Mammalian Gene Collection (MGC).</title>
        <authorList>
            <consortium name="The MGC Project Team"/>
        </authorList>
    </citation>
    <scope>NUCLEOTIDE SEQUENCE [LARGE SCALE MRNA]</scope>
    <source>
        <tissue>Placenta</tissue>
    </source>
</reference>
<reference key="5">
    <citation type="journal article" date="1997" name="J. Lipid Res.">
        <title>Post-translational regulation of mevalonate kinase by intermediates of the cholesterol and nonsterol isoprene biosynthetic pathways.</title>
        <authorList>
            <person name="Hinson D.D."/>
            <person name="Chambliss K.L."/>
            <person name="Toth M.J."/>
            <person name="Tanaka R.D."/>
            <person name="Gibson K.M."/>
        </authorList>
    </citation>
    <scope>BIOPHYSICOCHEMICAL PROPERTIES</scope>
    <scope>CATALYTIC ACTIVITY</scope>
    <scope>FUNCTION</scope>
</reference>
<reference key="6">
    <citation type="journal article" date="2000" name="J. Lipid Res.">
        <title>Identification of peroxisomal targeting signals in cholesterol biosynthetic enzymes. AA-CoA thiolase, hmg-coa synthase, MPPD, and FPP synthase.</title>
        <authorList>
            <person name="Olivier L.M."/>
            <person name="Kovacs W."/>
            <person name="Masuda K."/>
            <person name="Keller G.A."/>
            <person name="Krisans S.K."/>
        </authorList>
    </citation>
    <scope>SUBCELLULAR LOCATION</scope>
</reference>
<reference key="7">
    <citation type="journal article" date="2004" name="Mol. Genet. Metab.">
        <title>Human mevalonate pyrophosphate decarboxylase is localized in the cytosol.</title>
        <authorList>
            <person name="Hogenboom S."/>
            <person name="Tuyp J.J."/>
            <person name="Espeel M."/>
            <person name="Koster J."/>
            <person name="Wanders R.J."/>
            <person name="Waterham H.R."/>
        </authorList>
    </citation>
    <scope>SUBCELLULAR LOCATION</scope>
</reference>
<reference key="8">
    <citation type="journal article" date="2008" name="Proc. Natl. Acad. Sci. U.S.A.">
        <title>A quantitative atlas of mitotic phosphorylation.</title>
        <authorList>
            <person name="Dephoure N."/>
            <person name="Zhou C."/>
            <person name="Villen J."/>
            <person name="Beausoleil S.A."/>
            <person name="Bakalarski C.E."/>
            <person name="Elledge S.J."/>
            <person name="Gygi S.P."/>
        </authorList>
    </citation>
    <scope>PHOSPHORYLATION [LARGE SCALE ANALYSIS] AT SER-96</scope>
    <scope>IDENTIFICATION BY MASS SPECTROMETRY [LARGE SCALE ANALYSIS]</scope>
    <source>
        <tissue>Cervix carcinoma</tissue>
    </source>
</reference>
<reference key="9">
    <citation type="journal article" date="2009" name="Anal. Chem.">
        <title>Lys-N and trypsin cover complementary parts of the phosphoproteome in a refined SCX-based approach.</title>
        <authorList>
            <person name="Gauci S."/>
            <person name="Helbig A.O."/>
            <person name="Slijper M."/>
            <person name="Krijgsveld J."/>
            <person name="Heck A.J."/>
            <person name="Mohammed S."/>
        </authorList>
    </citation>
    <scope>ACETYLATION [LARGE SCALE ANALYSIS] AT ALA-2</scope>
    <scope>CLEAVAGE OF INITIATOR METHIONINE [LARGE SCALE ANALYSIS]</scope>
    <scope>IDENTIFICATION BY MASS SPECTROMETRY [LARGE SCALE ANALYSIS]</scope>
</reference>
<reference key="10">
    <citation type="journal article" date="2011" name="BMC Syst. Biol.">
        <title>Initial characterization of the human central proteome.</title>
        <authorList>
            <person name="Burkard T.R."/>
            <person name="Planyavsky M."/>
            <person name="Kaupe I."/>
            <person name="Breitwieser F.P."/>
            <person name="Buerckstuemmer T."/>
            <person name="Bennett K.L."/>
            <person name="Superti-Furga G."/>
            <person name="Colinge J."/>
        </authorList>
    </citation>
    <scope>IDENTIFICATION BY MASS SPECTROMETRY [LARGE SCALE ANALYSIS]</scope>
</reference>
<reference key="11">
    <citation type="journal article" date="2012" name="Mol. Cell. Proteomics">
        <title>Comparative large-scale characterisation of plant vs. mammal proteins reveals similar and idiosyncratic N-alpha acetylation features.</title>
        <authorList>
            <person name="Bienvenut W.V."/>
            <person name="Sumpton D."/>
            <person name="Martinez A."/>
            <person name="Lilla S."/>
            <person name="Espagne C."/>
            <person name="Meinnel T."/>
            <person name="Giglione C."/>
        </authorList>
    </citation>
    <scope>ACETYLATION [LARGE SCALE ANALYSIS] AT ALA-2</scope>
    <scope>CLEAVAGE OF INITIATOR METHIONINE [LARGE SCALE ANALYSIS]</scope>
    <scope>IDENTIFICATION BY MASS SPECTROMETRY [LARGE SCALE ANALYSIS]</scope>
</reference>
<reference key="12">
    <citation type="journal article" date="2013" name="J. Proteome Res.">
        <title>Toward a comprehensive characterization of a human cancer cell phosphoproteome.</title>
        <authorList>
            <person name="Zhou H."/>
            <person name="Di Palma S."/>
            <person name="Preisinger C."/>
            <person name="Peng M."/>
            <person name="Polat A.N."/>
            <person name="Heck A.J."/>
            <person name="Mohammed S."/>
        </authorList>
    </citation>
    <scope>PHOSPHORYLATION [LARGE SCALE ANALYSIS] AT SER-96</scope>
    <scope>IDENTIFICATION BY MASS SPECTROMETRY [LARGE SCALE ANALYSIS]</scope>
    <source>
        <tissue>Erythroleukemia</tissue>
    </source>
</reference>
<reference key="13">
    <citation type="journal article" date="2014" name="J. Proteomics">
        <title>An enzyme assisted RP-RPLC approach for in-depth analysis of human liver phosphoproteome.</title>
        <authorList>
            <person name="Bian Y."/>
            <person name="Song C."/>
            <person name="Cheng K."/>
            <person name="Dong M."/>
            <person name="Wang F."/>
            <person name="Huang J."/>
            <person name="Sun D."/>
            <person name="Wang L."/>
            <person name="Ye M."/>
            <person name="Zou H."/>
        </authorList>
    </citation>
    <scope>PHOSPHORYLATION [LARGE SCALE ANALYSIS] AT SER-96</scope>
    <scope>IDENTIFICATION BY MASS SPECTROMETRY [LARGE SCALE ANALYSIS]</scope>
    <source>
        <tissue>Liver</tissue>
    </source>
</reference>
<reference key="14">
    <citation type="journal article" date="2015" name="Elife">
        <title>Genomic variations of the mevalonate pathway in porokeratosis.</title>
        <authorList>
            <person name="Zhang Z."/>
            <person name="Li C."/>
            <person name="Wu F."/>
            <person name="Ma R."/>
            <person name="Luan J."/>
            <person name="Yang F."/>
            <person name="Liu W."/>
            <person name="Wang L."/>
            <person name="Zhang S."/>
            <person name="Liu Y."/>
            <person name="Gu J."/>
            <person name="Hua W."/>
            <person name="Fan M."/>
            <person name="Peng H."/>
            <person name="Meng X."/>
            <person name="Song N."/>
            <person name="Bi X."/>
            <person name="Gu C."/>
            <person name="Zhang Z."/>
            <person name="Huang Q."/>
            <person name="Chen L."/>
            <person name="Xiang L."/>
            <person name="Xu J."/>
            <person name="Zheng Z."/>
            <person name="Jiang Z."/>
        </authorList>
    </citation>
    <scope>INVOLVEMENT IN POROK7</scope>
    <scope>VARIANTS POROK7 ARG-101; VAL-128; GLN-161; LEU-161; GLN-228; TRP-228; SER-249; SER-292; ILE-371 DEL AND ARG-376</scope>
</reference>
<reference key="15">
    <citation type="journal article" date="2008" name="Arch. Biochem. Biophys.">
        <title>Human mevalonate diphosphate decarboxylase: characterization, investigation of the mevalonate diphosphate binding site, and crystal structure.</title>
        <authorList>
            <person name="Voynova N.E."/>
            <person name="Fu Z."/>
            <person name="Battaile K.P."/>
            <person name="Herdendorf T.J."/>
            <person name="Kim J.J."/>
            <person name="Miziorko H.M."/>
        </authorList>
    </citation>
    <scope>X-RAY CRYSTALLOGRAPHY (2.4 ANGSTROMS)</scope>
    <scope>MUTAGENESIS OF ASN-17</scope>
    <scope>CHARACTERIZATION OF VARIANT POROK7 GLN-161</scope>
    <scope>FUNCTION</scope>
    <scope>CATALYTIC ACTIVITY</scope>
    <scope>BIOPHYSICOCHEMICAL PROPERTIES</scope>
</reference>
<evidence type="ECO:0000250" key="1">
    <source>
        <dbReference type="UniProtKB" id="O23722"/>
    </source>
</evidence>
<evidence type="ECO:0000269" key="2">
    <source>
    </source>
</evidence>
<evidence type="ECO:0000269" key="3">
    <source>
    </source>
</evidence>
<evidence type="ECO:0000269" key="4">
    <source>
    </source>
</evidence>
<evidence type="ECO:0000269" key="5">
    <source>
    </source>
</evidence>
<evidence type="ECO:0000269" key="6">
    <source>
    </source>
</evidence>
<evidence type="ECO:0000269" key="7">
    <source>
    </source>
</evidence>
<evidence type="ECO:0000303" key="8">
    <source>
    </source>
</evidence>
<evidence type="ECO:0000305" key="9"/>
<evidence type="ECO:0007744" key="10">
    <source>
    </source>
</evidence>
<evidence type="ECO:0007744" key="11">
    <source>
    </source>
</evidence>
<evidence type="ECO:0007744" key="12">
    <source>
    </source>
</evidence>
<evidence type="ECO:0007744" key="13">
    <source>
    </source>
</evidence>
<evidence type="ECO:0007744" key="14">
    <source>
    </source>
</evidence>
<evidence type="ECO:0007829" key="15">
    <source>
        <dbReference type="PDB" id="3D4J"/>
    </source>
</evidence>
<sequence length="400" mass="43405">MASEKPLAAVTCTAPVNIAVIKYWGKRDEELVLPINSSLSVTLHQDQLKTTTTAVISKDFTEDRIWLNGREEDVGQPRLQACLREIRCLARKRRNSRDGDPLPSSLSCKVHVASVNNFPTAAGLASSAAGYACLAYTLARVYGVESDLSEVARRGSGSACRSLYGGFVEWQMGEQADGKDSIARQVAPESHWPELRVLILVVSAEKKLTGSTVGMRASVETSPLLRFRAESVVPARMAEMARCIRERDFPSFAQLTMKDSNQFHATCLDTFPPISYLNAISWRIIHLVHRFNAHHGDTKVAYTFDAGPNAVIFTLDDTVAEFVAAVWHGFPPGSNGDTFLKGLQVRPAPLSAELQAALAMEPTPGGVKYIIVTQVGPGPQILDDPCAHLLGPDGLPKPAA</sequence>
<accession>P53602</accession>
<accession>Q53Y65</accession>
<protein>
    <recommendedName>
        <fullName>Diphosphomevalonate decarboxylase</fullName>
        <ecNumber evidence="4 6 7">4.1.1.33</ecNumber>
    </recommendedName>
    <alternativeName>
        <fullName>Mevalonate (diphospho)decarboxylase</fullName>
        <shortName>MDDase</shortName>
    </alternativeName>
    <alternativeName>
        <fullName>Mevalonate pyrophosphate decarboxylase</fullName>
    </alternativeName>
</protein>
<gene>
    <name type="primary">MVD</name>
    <name evidence="8" type="synonym">MPD</name>
</gene>
<proteinExistence type="evidence at protein level"/>
<comment type="function">
    <text evidence="4 6 7">Catalyzes the ATP dependent decarboxylation of (R)-5-diphosphomevalonate to form isopentenyl diphosphate (IPP). Functions in the mevalonate (MVA) pathway leading to isopentenyl diphosphate (IPP), a key precursor for the biosynthesis of isoprenoids and sterol synthesis.</text>
</comment>
<comment type="catalytic activity">
    <reaction evidence="4 6 7">
        <text>(R)-5-diphosphomevalonate + ATP = isopentenyl diphosphate + ADP + phosphate + CO2</text>
        <dbReference type="Rhea" id="RHEA:23732"/>
        <dbReference type="ChEBI" id="CHEBI:16526"/>
        <dbReference type="ChEBI" id="CHEBI:30616"/>
        <dbReference type="ChEBI" id="CHEBI:43474"/>
        <dbReference type="ChEBI" id="CHEBI:57557"/>
        <dbReference type="ChEBI" id="CHEBI:128769"/>
        <dbReference type="ChEBI" id="CHEBI:456216"/>
        <dbReference type="EC" id="4.1.1.33"/>
    </reaction>
</comment>
<comment type="biophysicochemical properties">
    <kinetics>
        <KM evidence="7">7.4 uM for (R)-5-diphosphomevalonate</KM>
        <KM evidence="4">28.9 uM for (S,R)-5-diphosphomevalonate</KM>
        <KM evidence="4">0.69 mM for ATP</KM>
        <KM evidence="7">0.32 mM for ATP</KM>
    </kinetics>
</comment>
<comment type="pathway">
    <text evidence="9">Steroid biosynthesis; cholesterol biosynthesis.</text>
</comment>
<comment type="subunit">
    <text evidence="6">Homodimer.</text>
</comment>
<comment type="subcellular location">
    <subcellularLocation>
        <location evidence="3">Cytoplasm</location>
    </subcellularLocation>
</comment>
<comment type="tissue specificity">
    <text evidence="6">Expressed in heart, skeletal muscle, lung, liver, brain, pancreas, kidney and placenta.</text>
</comment>
<comment type="disease" evidence="4 5">
    <disease id="DI-04571">
        <name>Porokeratosis 7, multiple types</name>
        <acronym>POROK7</acronym>
        <description>A form of porokeratosis, a disorder of faulty keratinization characterized by one or more atrophic patches surrounded by a distinctive hyperkeratotic ridgelike border called the cornoid lamella. The keratotic lesions can progress to overt cutaneous neoplasms, typically squamous cell carcinomas. Multiple clinical variants of porokeratosis are recognized, including porokeratosis of Mibelli, linear porokeratosis, disseminated superficial actinic porokeratosis, palmoplantar porokeratosis, and punctate porokeratosis. Different clinical presentations can be observed among members of the same family. Individuals expressing more than one variant have also been reported.</description>
        <dbReference type="MIM" id="614714"/>
    </disease>
    <text>The disease is caused by variants affecting the gene represented in this entry.</text>
</comment>
<comment type="similarity">
    <text evidence="9">Belongs to the diphosphomevalonate decarboxylase family.</text>
</comment>
<comment type="caution">
    <text evidence="2 3">Was originally thought to be located in the peroxisome (PubMed:11108725). However, was later shown to be cytosolic (PubMed:14972328).</text>
</comment>